<organism>
    <name type="scientific">Desulfurococcus mucosus</name>
    <name type="common">Desulfurococcus mobilis</name>
    <dbReference type="NCBI Taxonomy" id="2275"/>
    <lineage>
        <taxon>Archaea</taxon>
        <taxon>Thermoproteota</taxon>
        <taxon>Thermoprotei</taxon>
        <taxon>Desulfurococcales</taxon>
        <taxon>Desulfurococcaceae</taxon>
        <taxon>Desulfurococcus</taxon>
    </lineage>
</organism>
<accession>P41207</accession>
<evidence type="ECO:0000250" key="1"/>
<evidence type="ECO:0000305" key="2"/>
<sequence>MVKIKIWSTNVKVLDDFVGKITDIVKKTGVRMDGPIPLPTKRMKIRTMKLPHGEGKKKYEKWEMR</sequence>
<keyword id="KW-0687">Ribonucleoprotein</keyword>
<keyword id="KW-0689">Ribosomal protein</keyword>
<gene>
    <name type="primary">rps10</name>
</gene>
<feature type="chain" id="PRO_0000146642" description="Small ribosomal subunit protein uS10">
    <location>
        <begin position="1"/>
        <end position="65" status="greater than"/>
    </location>
</feature>
<feature type="non-terminal residue">
    <location>
        <position position="65"/>
    </location>
</feature>
<protein>
    <recommendedName>
        <fullName evidence="2">Small ribosomal subunit protein uS10</fullName>
    </recommendedName>
    <alternativeName>
        <fullName>30S ribosomal protein S10</fullName>
    </alternativeName>
</protein>
<name>RS10_DESMO</name>
<reference key="1">
    <citation type="journal article" date="1995" name="Mol. Gen. Genet.">
        <title>Chromosomal organization and nucleotide sequence of the genes for elongation factors EF-1 alpha and EF-2 and ribosomal proteins S7 and S10 of the hyperthermophilic archaeum Desulfurococcus mobilis.</title>
        <authorList>
            <person name="Ceccarelli E."/>
            <person name="Bocchetta M."/>
            <person name="Creti R."/>
            <person name="Sanangelantoni A.M."/>
            <person name="Tiboni O."/>
            <person name="Cammarano P."/>
        </authorList>
    </citation>
    <scope>NUCLEOTIDE SEQUENCE [GENOMIC DNA]</scope>
    <source>
        <strain>ATCC 35582 / DSM 2161 / JCM 9186 / Hvv 3/9</strain>
    </source>
</reference>
<proteinExistence type="inferred from homology"/>
<dbReference type="EMBL" id="X73582">
    <property type="protein sequence ID" value="CAA51985.1"/>
    <property type="molecule type" value="Genomic_DNA"/>
</dbReference>
<dbReference type="PIR" id="S54735">
    <property type="entry name" value="S54735"/>
</dbReference>
<dbReference type="SMR" id="P41207"/>
<dbReference type="GO" id="GO:1990904">
    <property type="term" value="C:ribonucleoprotein complex"/>
    <property type="evidence" value="ECO:0007669"/>
    <property type="project" value="UniProtKB-KW"/>
</dbReference>
<dbReference type="GO" id="GO:0005840">
    <property type="term" value="C:ribosome"/>
    <property type="evidence" value="ECO:0007669"/>
    <property type="project" value="UniProtKB-KW"/>
</dbReference>
<dbReference type="GO" id="GO:0003723">
    <property type="term" value="F:RNA binding"/>
    <property type="evidence" value="ECO:0007669"/>
    <property type="project" value="InterPro"/>
</dbReference>
<dbReference type="GO" id="GO:0003735">
    <property type="term" value="F:structural constituent of ribosome"/>
    <property type="evidence" value="ECO:0007669"/>
    <property type="project" value="InterPro"/>
</dbReference>
<dbReference type="GO" id="GO:0006412">
    <property type="term" value="P:translation"/>
    <property type="evidence" value="ECO:0007669"/>
    <property type="project" value="InterPro"/>
</dbReference>
<dbReference type="Gene3D" id="3.30.70.600">
    <property type="entry name" value="Ribosomal protein S10 domain"/>
    <property type="match status" value="1"/>
</dbReference>
<dbReference type="InterPro" id="IPR001848">
    <property type="entry name" value="Ribosomal_uS10"/>
</dbReference>
<dbReference type="InterPro" id="IPR018268">
    <property type="entry name" value="Ribosomal_uS10_CS"/>
</dbReference>
<dbReference type="InterPro" id="IPR027486">
    <property type="entry name" value="Ribosomal_uS10_dom"/>
</dbReference>
<dbReference type="InterPro" id="IPR036838">
    <property type="entry name" value="Ribosomal_uS10_dom_sf"/>
</dbReference>
<dbReference type="PANTHER" id="PTHR11700">
    <property type="entry name" value="30S RIBOSOMAL PROTEIN S10 FAMILY MEMBER"/>
    <property type="match status" value="1"/>
</dbReference>
<dbReference type="Pfam" id="PF00338">
    <property type="entry name" value="Ribosomal_S10"/>
    <property type="match status" value="1"/>
</dbReference>
<dbReference type="PRINTS" id="PR00971">
    <property type="entry name" value="RIBOSOMALS10"/>
</dbReference>
<dbReference type="SMART" id="SM01403">
    <property type="entry name" value="Ribosomal_S10"/>
    <property type="match status" value="1"/>
</dbReference>
<dbReference type="SUPFAM" id="SSF54999">
    <property type="entry name" value="Ribosomal protein S10"/>
    <property type="match status" value="1"/>
</dbReference>
<dbReference type="PROSITE" id="PS00361">
    <property type="entry name" value="RIBOSOMAL_S10"/>
    <property type="match status" value="1"/>
</dbReference>
<comment type="function">
    <text evidence="1">Involved in the binding of tRNA to the ribosomes.</text>
</comment>
<comment type="subunit">
    <text evidence="1">Part of the 30S ribosomal subunit.</text>
</comment>
<comment type="similarity">
    <text evidence="2">Belongs to the universal ribosomal protein uS10 family.</text>
</comment>